<dbReference type="EMBL" id="AM933172">
    <property type="protein sequence ID" value="CAR32679.1"/>
    <property type="molecule type" value="Genomic_DNA"/>
</dbReference>
<dbReference type="RefSeq" id="WP_001185780.1">
    <property type="nucleotide sequence ID" value="NC_011294.1"/>
</dbReference>
<dbReference type="SMR" id="B5R144"/>
<dbReference type="KEGG" id="set:SEN1096"/>
<dbReference type="HOGENOM" id="CLU_050555_3_1_6"/>
<dbReference type="Proteomes" id="UP000000613">
    <property type="component" value="Chromosome"/>
</dbReference>
<dbReference type="GO" id="GO:0005737">
    <property type="term" value="C:cytoplasm"/>
    <property type="evidence" value="ECO:0007669"/>
    <property type="project" value="UniProtKB-SubCell"/>
</dbReference>
<dbReference type="GO" id="GO:0005507">
    <property type="term" value="F:copper ion binding"/>
    <property type="evidence" value="ECO:0007669"/>
    <property type="project" value="TreeGrafter"/>
</dbReference>
<dbReference type="FunFam" id="3.20.20.380:FF:000001">
    <property type="entry name" value="Copper homeostasis protein CutC"/>
    <property type="match status" value="1"/>
</dbReference>
<dbReference type="Gene3D" id="3.20.20.380">
    <property type="entry name" value="Copper homeostasis (CutC) domain"/>
    <property type="match status" value="1"/>
</dbReference>
<dbReference type="HAMAP" id="MF_00795">
    <property type="entry name" value="CutC"/>
    <property type="match status" value="1"/>
</dbReference>
<dbReference type="InterPro" id="IPR005627">
    <property type="entry name" value="CutC-like"/>
</dbReference>
<dbReference type="InterPro" id="IPR036822">
    <property type="entry name" value="CutC-like_dom_sf"/>
</dbReference>
<dbReference type="NCBIfam" id="NF008603">
    <property type="entry name" value="PRK11572.1"/>
    <property type="match status" value="1"/>
</dbReference>
<dbReference type="PANTHER" id="PTHR12598">
    <property type="entry name" value="COPPER HOMEOSTASIS PROTEIN CUTC"/>
    <property type="match status" value="1"/>
</dbReference>
<dbReference type="PANTHER" id="PTHR12598:SF0">
    <property type="entry name" value="COPPER HOMEOSTASIS PROTEIN CUTC HOMOLOG"/>
    <property type="match status" value="1"/>
</dbReference>
<dbReference type="Pfam" id="PF03932">
    <property type="entry name" value="CutC"/>
    <property type="match status" value="1"/>
</dbReference>
<dbReference type="SUPFAM" id="SSF110395">
    <property type="entry name" value="CutC-like"/>
    <property type="match status" value="1"/>
</dbReference>
<proteinExistence type="inferred from homology"/>
<keyword id="KW-0963">Cytoplasm</keyword>
<accession>B5R144</accession>
<evidence type="ECO:0000255" key="1">
    <source>
        <dbReference type="HAMAP-Rule" id="MF_00795"/>
    </source>
</evidence>
<gene>
    <name evidence="1" type="primary">cutC</name>
    <name type="ordered locus">SEN1096</name>
</gene>
<organism>
    <name type="scientific">Salmonella enteritidis PT4 (strain P125109)</name>
    <dbReference type="NCBI Taxonomy" id="550537"/>
    <lineage>
        <taxon>Bacteria</taxon>
        <taxon>Pseudomonadati</taxon>
        <taxon>Pseudomonadota</taxon>
        <taxon>Gammaproteobacteria</taxon>
        <taxon>Enterobacterales</taxon>
        <taxon>Enterobacteriaceae</taxon>
        <taxon>Salmonella</taxon>
    </lineage>
</organism>
<comment type="subunit">
    <text evidence="1">Homodimer.</text>
</comment>
<comment type="subcellular location">
    <subcellularLocation>
        <location evidence="1">Cytoplasm</location>
    </subcellularLocation>
</comment>
<comment type="similarity">
    <text evidence="1">Belongs to the CutC family.</text>
</comment>
<comment type="caution">
    <text evidence="1">Once thought to be involved in copper homeostasis, experiments in E.coli have shown this is not the case.</text>
</comment>
<sequence length="248" mass="26577">MALLEICCYSMECALTAQRNGADRIELCAAPKEGGLTPSLGVLRSVREHITIPVHPIIRPRGGDFYYTDGEFAAMLEDIRLVRELGFPGLVTGVLTVDGDVDMSRMEKIMAAAGPLAVTFHRAFDMCANPFNALKNLADAGVARVLTSGQKADAAQGLSIIMELIAQGDAPTIMAGAGVRANNLQNFLDAGVREVHSSAGVLLPSPMRYRNQGLSMSADIQADEYSRYRVEGAAVAEMKGIIVRHQAK</sequence>
<protein>
    <recommendedName>
        <fullName evidence="1">PF03932 family protein CutC</fullName>
    </recommendedName>
</protein>
<name>CUTC_SALEP</name>
<reference key="1">
    <citation type="journal article" date="2008" name="Genome Res.">
        <title>Comparative genome analysis of Salmonella enteritidis PT4 and Salmonella gallinarum 287/91 provides insights into evolutionary and host adaptation pathways.</title>
        <authorList>
            <person name="Thomson N.R."/>
            <person name="Clayton D.J."/>
            <person name="Windhorst D."/>
            <person name="Vernikos G."/>
            <person name="Davidson S."/>
            <person name="Churcher C."/>
            <person name="Quail M.A."/>
            <person name="Stevens M."/>
            <person name="Jones M.A."/>
            <person name="Watson M."/>
            <person name="Barron A."/>
            <person name="Layton A."/>
            <person name="Pickard D."/>
            <person name="Kingsley R.A."/>
            <person name="Bignell A."/>
            <person name="Clark L."/>
            <person name="Harris B."/>
            <person name="Ormond D."/>
            <person name="Abdellah Z."/>
            <person name="Brooks K."/>
            <person name="Cherevach I."/>
            <person name="Chillingworth T."/>
            <person name="Woodward J."/>
            <person name="Norberczak H."/>
            <person name="Lord A."/>
            <person name="Arrowsmith C."/>
            <person name="Jagels K."/>
            <person name="Moule S."/>
            <person name="Mungall K."/>
            <person name="Saunders M."/>
            <person name="Whitehead S."/>
            <person name="Chabalgoity J.A."/>
            <person name="Maskell D."/>
            <person name="Humphreys T."/>
            <person name="Roberts M."/>
            <person name="Barrow P.A."/>
            <person name="Dougan G."/>
            <person name="Parkhill J."/>
        </authorList>
    </citation>
    <scope>NUCLEOTIDE SEQUENCE [LARGE SCALE GENOMIC DNA]</scope>
    <source>
        <strain>P125109</strain>
    </source>
</reference>
<feature type="chain" id="PRO_1000133844" description="PF03932 family protein CutC">
    <location>
        <begin position="1"/>
        <end position="248"/>
    </location>
</feature>